<accession>A1X151</accession>
<gene>
    <name type="primary">CAPZA2</name>
</gene>
<evidence type="ECO:0000250" key="1"/>
<evidence type="ECO:0000250" key="2">
    <source>
        <dbReference type="UniProtKB" id="P47755"/>
    </source>
</evidence>
<evidence type="ECO:0000305" key="3"/>
<proteinExistence type="inferred from homology"/>
<feature type="initiator methionine" description="Removed" evidence="2">
    <location>
        <position position="1"/>
    </location>
</feature>
<feature type="chain" id="PRO_0000279201" description="F-actin-capping protein subunit alpha-2">
    <location>
        <begin position="2"/>
        <end position="286"/>
    </location>
</feature>
<feature type="modified residue" description="N-acetylalanine" evidence="2">
    <location>
        <position position="2"/>
    </location>
</feature>
<feature type="modified residue" description="Phosphoserine" evidence="2">
    <location>
        <position position="9"/>
    </location>
</feature>
<name>CAZA2_ECHTE</name>
<reference key="1">
    <citation type="submission" date="2006-12" db="EMBL/GenBank/DDBJ databases">
        <title>NISC comparative sequencing initiative.</title>
        <authorList>
            <person name="Antonellis A."/>
            <person name="Ayele K."/>
            <person name="Benjamin B."/>
            <person name="Blakesley R.W."/>
            <person name="Boakye A."/>
            <person name="Bouffard G.G."/>
            <person name="Brinkley C."/>
            <person name="Brooks S."/>
            <person name="Chu G."/>
            <person name="Coleman H."/>
            <person name="Engle J."/>
            <person name="Gestole M."/>
            <person name="Greene A."/>
            <person name="Guan X."/>
            <person name="Gupta J."/>
            <person name="Haghighi P."/>
            <person name="Han J."/>
            <person name="Hansen N."/>
            <person name="Ho S.-L."/>
            <person name="Hu P."/>
            <person name="Hunter G."/>
            <person name="Hurle B."/>
            <person name="Idol J.R."/>
            <person name="Kwong P."/>
            <person name="Laric P."/>
            <person name="Larson S."/>
            <person name="Lee-Lin S.-Q."/>
            <person name="Legaspi R."/>
            <person name="Madden M."/>
            <person name="Maduro Q.L."/>
            <person name="Maduro V.B."/>
            <person name="Margulies E.H."/>
            <person name="Masiello C."/>
            <person name="Maskeri B."/>
            <person name="McDowell J."/>
            <person name="Mojidi H.A."/>
            <person name="Mullikin J.C."/>
            <person name="Oestreicher J.S."/>
            <person name="Park M."/>
            <person name="Portnoy M.E."/>
            <person name="Prasad A."/>
            <person name="Puri O."/>
            <person name="Reddix-Dugue N."/>
            <person name="Schandler K."/>
            <person name="Schueler M.G."/>
            <person name="Sison C."/>
            <person name="Stantripop S."/>
            <person name="Stephen E."/>
            <person name="Taye A."/>
            <person name="Thomas J.W."/>
            <person name="Thomas P.J."/>
            <person name="Tsipouri V."/>
            <person name="Ung L."/>
            <person name="Vogt J.L."/>
            <person name="Wetherby K.D."/>
            <person name="Young A."/>
            <person name="Green E.D."/>
        </authorList>
    </citation>
    <scope>NUCLEOTIDE SEQUENCE [LARGE SCALE GENOMIC DNA]</scope>
</reference>
<dbReference type="EMBL" id="DP000274">
    <property type="protein sequence ID" value="ABL76167.1"/>
    <property type="molecule type" value="Genomic_DNA"/>
</dbReference>
<dbReference type="SMR" id="A1X151"/>
<dbReference type="Proteomes" id="UP000694863">
    <property type="component" value="Unplaced"/>
</dbReference>
<dbReference type="GO" id="GO:0030863">
    <property type="term" value="C:cortical cytoskeleton"/>
    <property type="evidence" value="ECO:0007669"/>
    <property type="project" value="TreeGrafter"/>
</dbReference>
<dbReference type="GO" id="GO:0008290">
    <property type="term" value="C:F-actin capping protein complex"/>
    <property type="evidence" value="ECO:0007669"/>
    <property type="project" value="InterPro"/>
</dbReference>
<dbReference type="GO" id="GO:0051015">
    <property type="term" value="F:actin filament binding"/>
    <property type="evidence" value="ECO:0007669"/>
    <property type="project" value="TreeGrafter"/>
</dbReference>
<dbReference type="GO" id="GO:0030036">
    <property type="term" value="P:actin cytoskeleton organization"/>
    <property type="evidence" value="ECO:0007669"/>
    <property type="project" value="TreeGrafter"/>
</dbReference>
<dbReference type="GO" id="GO:0051016">
    <property type="term" value="P:barbed-end actin filament capping"/>
    <property type="evidence" value="ECO:0007669"/>
    <property type="project" value="InterPro"/>
</dbReference>
<dbReference type="FunFam" id="3.30.1140.60:FF:000001">
    <property type="entry name" value="F-actin-capping protein subunit alpha"/>
    <property type="match status" value="1"/>
</dbReference>
<dbReference type="FunFam" id="3.90.1150.210:FF:000002">
    <property type="entry name" value="F-actin-capping protein subunit alpha"/>
    <property type="match status" value="1"/>
</dbReference>
<dbReference type="Gene3D" id="3.30.1140.60">
    <property type="entry name" value="F-actin capping protein, alpha subunit"/>
    <property type="match status" value="1"/>
</dbReference>
<dbReference type="Gene3D" id="3.90.1150.210">
    <property type="entry name" value="F-actin capping protein, beta subunit"/>
    <property type="match status" value="1"/>
</dbReference>
<dbReference type="InterPro" id="IPR002189">
    <property type="entry name" value="CapZ_alpha"/>
</dbReference>
<dbReference type="InterPro" id="IPR037282">
    <property type="entry name" value="CapZ_alpha/beta"/>
</dbReference>
<dbReference type="InterPro" id="IPR042276">
    <property type="entry name" value="CapZ_alpha/beta_2"/>
</dbReference>
<dbReference type="InterPro" id="IPR042489">
    <property type="entry name" value="CapZ_alpha_1"/>
</dbReference>
<dbReference type="InterPro" id="IPR017865">
    <property type="entry name" value="F-actin_cap_asu_CS"/>
</dbReference>
<dbReference type="PANTHER" id="PTHR10653">
    <property type="entry name" value="F-ACTIN-CAPPING PROTEIN SUBUNIT ALPHA"/>
    <property type="match status" value="1"/>
</dbReference>
<dbReference type="PANTHER" id="PTHR10653:SF2">
    <property type="entry name" value="F-ACTIN-CAPPING PROTEIN SUBUNIT ALPHA-2"/>
    <property type="match status" value="1"/>
</dbReference>
<dbReference type="Pfam" id="PF01267">
    <property type="entry name" value="F-actin_cap_A"/>
    <property type="match status" value="1"/>
</dbReference>
<dbReference type="PRINTS" id="PR00191">
    <property type="entry name" value="FACTINCAPA"/>
</dbReference>
<dbReference type="SUPFAM" id="SSF90096">
    <property type="entry name" value="Subunits of heterodimeric actin filament capping protein Capz"/>
    <property type="match status" value="1"/>
</dbReference>
<dbReference type="PROSITE" id="PS00748">
    <property type="entry name" value="F_ACTIN_CAPPING_A_1"/>
    <property type="match status" value="1"/>
</dbReference>
<dbReference type="PROSITE" id="PS00749">
    <property type="entry name" value="F_ACTIN_CAPPING_A_2"/>
    <property type="match status" value="1"/>
</dbReference>
<organism>
    <name type="scientific">Echinops telfairi</name>
    <name type="common">Lesser hedgehog tenrec</name>
    <dbReference type="NCBI Taxonomy" id="9371"/>
    <lineage>
        <taxon>Eukaryota</taxon>
        <taxon>Metazoa</taxon>
        <taxon>Chordata</taxon>
        <taxon>Craniata</taxon>
        <taxon>Vertebrata</taxon>
        <taxon>Euteleostomi</taxon>
        <taxon>Mammalia</taxon>
        <taxon>Eutheria</taxon>
        <taxon>Afrotheria</taxon>
        <taxon>Tenrecidae</taxon>
        <taxon>Tenrecinae</taxon>
        <taxon>Echinops</taxon>
    </lineage>
</organism>
<protein>
    <recommendedName>
        <fullName>F-actin-capping protein subunit alpha-2</fullName>
    </recommendedName>
    <alternativeName>
        <fullName>CapZ alpha-2</fullName>
    </alternativeName>
</protein>
<comment type="function">
    <text evidence="1">F-actin-capping proteins bind in a Ca(2+)-independent manner to the fast growing ends of actin filaments (barbed end) thereby blocking the exchange of subunits at these ends. Unlike other capping proteins (such as gelsolin and severin), these proteins do not sever actin filaments (By similarity).</text>
</comment>
<comment type="subunit">
    <text evidence="1 2">Component of the F-actin capping complex, composed of a heterodimer of an alpha and a beta subunit. Component of the WASH complex, composed of F-actin-capping protein subunit alpha (CAPZA1, CAPZA2 or CAPZA3), F-actin-capping protein subunit beta (CAPZB), WASHC1, WASHC2, WASHC3, WASHC4 and WASHC5. Interacts with RCSD1/CAPZIP (By similarity). Directly interacts with CRACD; this interaction decreases binding to actin (By similarity).</text>
</comment>
<comment type="similarity">
    <text evidence="3">Belongs to the F-actin-capping protein alpha subunit family.</text>
</comment>
<keyword id="KW-0007">Acetylation</keyword>
<keyword id="KW-0117">Actin capping</keyword>
<keyword id="KW-0009">Actin-binding</keyword>
<keyword id="KW-0597">Phosphoprotein</keyword>
<sequence length="286" mass="32939">MADLEEQLSDEEKVRIAAKFIIHAPPGEFNEVFNDVRLLLNNDNLLREGAAHAFAQYNLDQFTPVKIDGYEDQVLITEHGDLGNGKFLDPKNRICFKFDHLRKEATDPRPYEAENAAESWRTSVETALRAYVKEHYPNGVCTVYGKKIDGQQTIIACIESHQFQAKNFWNGRWRSEWKFTITPSTTQVVGILKIQVHYYEDGNVQLVSHKDIQDSLTVSNEVQTAKEFIKIVEAAENEYQTAISENYQTMSDTTFKALRRQLPVTRTKIDWNKILSYKIGKEMQNA</sequence>